<comment type="function">
    <text evidence="1">Catalyzes the 2-thiolation of uridine at the wobble position (U34) of tRNA, leading to the formation of s(2)U34.</text>
</comment>
<comment type="catalytic activity">
    <reaction evidence="1">
        <text>S-sulfanyl-L-cysteinyl-[protein] + uridine(34) in tRNA + AH2 + ATP = 2-thiouridine(34) in tRNA + L-cysteinyl-[protein] + A + AMP + diphosphate + H(+)</text>
        <dbReference type="Rhea" id="RHEA:47032"/>
        <dbReference type="Rhea" id="RHEA-COMP:10131"/>
        <dbReference type="Rhea" id="RHEA-COMP:11726"/>
        <dbReference type="Rhea" id="RHEA-COMP:11727"/>
        <dbReference type="Rhea" id="RHEA-COMP:11728"/>
        <dbReference type="ChEBI" id="CHEBI:13193"/>
        <dbReference type="ChEBI" id="CHEBI:15378"/>
        <dbReference type="ChEBI" id="CHEBI:17499"/>
        <dbReference type="ChEBI" id="CHEBI:29950"/>
        <dbReference type="ChEBI" id="CHEBI:30616"/>
        <dbReference type="ChEBI" id="CHEBI:33019"/>
        <dbReference type="ChEBI" id="CHEBI:61963"/>
        <dbReference type="ChEBI" id="CHEBI:65315"/>
        <dbReference type="ChEBI" id="CHEBI:87170"/>
        <dbReference type="ChEBI" id="CHEBI:456215"/>
        <dbReference type="EC" id="2.8.1.13"/>
    </reaction>
</comment>
<comment type="subcellular location">
    <subcellularLocation>
        <location evidence="1">Cytoplasm</location>
    </subcellularLocation>
</comment>
<comment type="similarity">
    <text evidence="1">Belongs to the MnmA/TRMU family.</text>
</comment>
<gene>
    <name evidence="1" type="primary">mnmA</name>
    <name type="ordered locus">Lferr_0829</name>
</gene>
<reference key="1">
    <citation type="submission" date="2008-08" db="EMBL/GenBank/DDBJ databases">
        <title>Complete sequence of Acidithiobacillus ferrooxidans ATCC 53993.</title>
        <authorList>
            <person name="Lucas S."/>
            <person name="Copeland A."/>
            <person name="Lapidus A."/>
            <person name="Glavina del Rio T."/>
            <person name="Dalin E."/>
            <person name="Tice H."/>
            <person name="Bruce D."/>
            <person name="Goodwin L."/>
            <person name="Pitluck S."/>
            <person name="Sims D."/>
            <person name="Brettin T."/>
            <person name="Detter J.C."/>
            <person name="Han C."/>
            <person name="Kuske C.R."/>
            <person name="Larimer F."/>
            <person name="Land M."/>
            <person name="Hauser L."/>
            <person name="Kyrpides N."/>
            <person name="Lykidis A."/>
            <person name="Borole A.P."/>
        </authorList>
    </citation>
    <scope>NUCLEOTIDE SEQUENCE [LARGE SCALE GENOMIC DNA]</scope>
    <source>
        <strain>ATCC 53993 / BNL-5-31</strain>
    </source>
</reference>
<feature type="chain" id="PRO_1000203300" description="tRNA-specific 2-thiouridylase MnmA">
    <location>
        <begin position="1"/>
        <end position="352"/>
    </location>
</feature>
<feature type="region of interest" description="Interaction with tRNA" evidence="1">
    <location>
        <begin position="142"/>
        <end position="144"/>
    </location>
</feature>
<feature type="region of interest" description="Interaction with tRNA" evidence="1">
    <location>
        <begin position="299"/>
        <end position="300"/>
    </location>
</feature>
<feature type="active site" description="Nucleophile" evidence="1">
    <location>
        <position position="96"/>
    </location>
</feature>
<feature type="active site" description="Cysteine persulfide intermediate" evidence="1">
    <location>
        <position position="192"/>
    </location>
</feature>
<feature type="binding site" evidence="1">
    <location>
        <begin position="9"/>
        <end position="16"/>
    </location>
    <ligand>
        <name>ATP</name>
        <dbReference type="ChEBI" id="CHEBI:30616"/>
    </ligand>
</feature>
<feature type="binding site" evidence="1">
    <location>
        <position position="35"/>
    </location>
    <ligand>
        <name>ATP</name>
        <dbReference type="ChEBI" id="CHEBI:30616"/>
    </ligand>
</feature>
<feature type="binding site" evidence="1">
    <location>
        <position position="120"/>
    </location>
    <ligand>
        <name>ATP</name>
        <dbReference type="ChEBI" id="CHEBI:30616"/>
    </ligand>
</feature>
<feature type="site" description="Interaction with tRNA" evidence="1">
    <location>
        <position position="121"/>
    </location>
</feature>
<feature type="site" description="Interaction with tRNA" evidence="1">
    <location>
        <position position="332"/>
    </location>
</feature>
<feature type="disulfide bond" description="Alternate" evidence="1">
    <location>
        <begin position="96"/>
        <end position="192"/>
    </location>
</feature>
<proteinExistence type="inferred from homology"/>
<protein>
    <recommendedName>
        <fullName evidence="1">tRNA-specific 2-thiouridylase MnmA</fullName>
        <ecNumber evidence="1">2.8.1.13</ecNumber>
    </recommendedName>
</protein>
<sequence length="352" mass="38470">MADKKALIALSGGVDSAVAALLMQGQGYELTGVTMRLWPRSRCCDEKDIEDAAEICARLGIPYTVLDYREAFRRQVVDVFVAEYQAGRTPNPCARCNQFLKFDALLAEGEKLGATMLATGHYARLAETSSGTALLRGRDHAKDQSYFLFAIGAGILSRLRFPVGGMNKDEVRAMARKHGLPVAAKQDSQDICFVPDGDYRRFLEDYAGLDMAQEGEMVDSSGQVLGHHPGTLHFTVGQRKGLGGGSDQPRYVLALDPAQNRVIVGGEDELYRGVVSLAECNWLTDLSPGETHAVTVKLRYRSRAESAMLHLLSDARAELRFREPQRAVTPGQAAVCYQGERLLGGGWIQGTE</sequence>
<keyword id="KW-0067">ATP-binding</keyword>
<keyword id="KW-0963">Cytoplasm</keyword>
<keyword id="KW-1015">Disulfide bond</keyword>
<keyword id="KW-0547">Nucleotide-binding</keyword>
<keyword id="KW-0694">RNA-binding</keyword>
<keyword id="KW-0808">Transferase</keyword>
<keyword id="KW-0819">tRNA processing</keyword>
<keyword id="KW-0820">tRNA-binding</keyword>
<accession>B5ENY8</accession>
<dbReference type="EC" id="2.8.1.13" evidence="1"/>
<dbReference type="EMBL" id="CP001132">
    <property type="protein sequence ID" value="ACH83079.1"/>
    <property type="molecule type" value="Genomic_DNA"/>
</dbReference>
<dbReference type="RefSeq" id="WP_012536279.1">
    <property type="nucleotide sequence ID" value="NC_011206.1"/>
</dbReference>
<dbReference type="SMR" id="B5ENY8"/>
<dbReference type="GeneID" id="65280031"/>
<dbReference type="KEGG" id="afe:Lferr_0829"/>
<dbReference type="eggNOG" id="COG0482">
    <property type="taxonomic scope" value="Bacteria"/>
</dbReference>
<dbReference type="HOGENOM" id="CLU_035188_0_0_6"/>
<dbReference type="GO" id="GO:0005737">
    <property type="term" value="C:cytoplasm"/>
    <property type="evidence" value="ECO:0007669"/>
    <property type="project" value="UniProtKB-SubCell"/>
</dbReference>
<dbReference type="GO" id="GO:0005524">
    <property type="term" value="F:ATP binding"/>
    <property type="evidence" value="ECO:0007669"/>
    <property type="project" value="UniProtKB-KW"/>
</dbReference>
<dbReference type="GO" id="GO:0000049">
    <property type="term" value="F:tRNA binding"/>
    <property type="evidence" value="ECO:0007669"/>
    <property type="project" value="UniProtKB-KW"/>
</dbReference>
<dbReference type="GO" id="GO:0103016">
    <property type="term" value="F:tRNA-uridine 2-sulfurtransferase activity"/>
    <property type="evidence" value="ECO:0007669"/>
    <property type="project" value="UniProtKB-EC"/>
</dbReference>
<dbReference type="GO" id="GO:0002143">
    <property type="term" value="P:tRNA wobble position uridine thiolation"/>
    <property type="evidence" value="ECO:0007669"/>
    <property type="project" value="TreeGrafter"/>
</dbReference>
<dbReference type="CDD" id="cd01998">
    <property type="entry name" value="MnmA_TRMU-like"/>
    <property type="match status" value="1"/>
</dbReference>
<dbReference type="FunFam" id="3.40.50.620:FF:000115">
    <property type="entry name" value="tRNA-specific 2-thiouridylase MnmA"/>
    <property type="match status" value="1"/>
</dbReference>
<dbReference type="Gene3D" id="2.30.30.280">
    <property type="entry name" value="Adenine nucleotide alpha hydrolases-like domains"/>
    <property type="match status" value="1"/>
</dbReference>
<dbReference type="Gene3D" id="3.40.50.620">
    <property type="entry name" value="HUPs"/>
    <property type="match status" value="1"/>
</dbReference>
<dbReference type="Gene3D" id="2.40.30.10">
    <property type="entry name" value="Translation factors"/>
    <property type="match status" value="1"/>
</dbReference>
<dbReference type="HAMAP" id="MF_00144">
    <property type="entry name" value="tRNA_thiouridyl_MnmA"/>
    <property type="match status" value="1"/>
</dbReference>
<dbReference type="InterPro" id="IPR004506">
    <property type="entry name" value="MnmA-like"/>
</dbReference>
<dbReference type="InterPro" id="IPR046885">
    <property type="entry name" value="MnmA-like_C"/>
</dbReference>
<dbReference type="InterPro" id="IPR046884">
    <property type="entry name" value="MnmA-like_central"/>
</dbReference>
<dbReference type="InterPro" id="IPR023382">
    <property type="entry name" value="MnmA-like_central_sf"/>
</dbReference>
<dbReference type="InterPro" id="IPR014729">
    <property type="entry name" value="Rossmann-like_a/b/a_fold"/>
</dbReference>
<dbReference type="NCBIfam" id="NF001138">
    <property type="entry name" value="PRK00143.1"/>
    <property type="match status" value="1"/>
</dbReference>
<dbReference type="NCBIfam" id="TIGR00420">
    <property type="entry name" value="trmU"/>
    <property type="match status" value="1"/>
</dbReference>
<dbReference type="PANTHER" id="PTHR11933:SF5">
    <property type="entry name" value="MITOCHONDRIAL TRNA-SPECIFIC 2-THIOURIDYLASE 1"/>
    <property type="match status" value="1"/>
</dbReference>
<dbReference type="PANTHER" id="PTHR11933">
    <property type="entry name" value="TRNA 5-METHYLAMINOMETHYL-2-THIOURIDYLATE -METHYLTRANSFERASE"/>
    <property type="match status" value="1"/>
</dbReference>
<dbReference type="Pfam" id="PF03054">
    <property type="entry name" value="tRNA_Me_trans"/>
    <property type="match status" value="1"/>
</dbReference>
<dbReference type="Pfam" id="PF20258">
    <property type="entry name" value="tRNA_Me_trans_C"/>
    <property type="match status" value="1"/>
</dbReference>
<dbReference type="Pfam" id="PF20259">
    <property type="entry name" value="tRNA_Me_trans_M"/>
    <property type="match status" value="1"/>
</dbReference>
<dbReference type="SUPFAM" id="SSF52402">
    <property type="entry name" value="Adenine nucleotide alpha hydrolases-like"/>
    <property type="match status" value="1"/>
</dbReference>
<name>MNMA_ACIF5</name>
<evidence type="ECO:0000255" key="1">
    <source>
        <dbReference type="HAMAP-Rule" id="MF_00144"/>
    </source>
</evidence>
<organism>
    <name type="scientific">Acidithiobacillus ferrooxidans (strain ATCC 53993 / BNL-5-31)</name>
    <name type="common">Leptospirillum ferrooxidans (ATCC 53993)</name>
    <dbReference type="NCBI Taxonomy" id="380394"/>
    <lineage>
        <taxon>Bacteria</taxon>
        <taxon>Pseudomonadati</taxon>
        <taxon>Pseudomonadota</taxon>
        <taxon>Acidithiobacillia</taxon>
        <taxon>Acidithiobacillales</taxon>
        <taxon>Acidithiobacillaceae</taxon>
        <taxon>Acidithiobacillus</taxon>
    </lineage>
</organism>